<protein>
    <recommendedName>
        <fullName>Pre-rRNA-processing protein PNO1</fullName>
    </recommendedName>
</protein>
<organism>
    <name type="scientific">Debaryomyces hansenii (strain ATCC 36239 / CBS 767 / BCRC 21394 / JCM 1990 / NBRC 0083 / IGC 2968)</name>
    <name type="common">Yeast</name>
    <name type="synonym">Torulaspora hansenii</name>
    <dbReference type="NCBI Taxonomy" id="284592"/>
    <lineage>
        <taxon>Eukaryota</taxon>
        <taxon>Fungi</taxon>
        <taxon>Dikarya</taxon>
        <taxon>Ascomycota</taxon>
        <taxon>Saccharomycotina</taxon>
        <taxon>Pichiomycetes</taxon>
        <taxon>Debaryomycetaceae</taxon>
        <taxon>Debaryomyces</taxon>
    </lineage>
</organism>
<comment type="function">
    <text evidence="1">Required for small ribosomal subunit (SSU) synthesis. Has a role in the processing of early nucleolar and late cytoplasmic pre-RNA species (By similarity).</text>
</comment>
<comment type="subunit">
    <text evidence="1">Component of the small ribosomal subunit, ribosomal RNA processing complex (SSU RRP complex).</text>
</comment>
<comment type="subcellular location">
    <subcellularLocation>
        <location evidence="2">Cytoplasm</location>
    </subcellularLocation>
    <subcellularLocation>
        <location evidence="2">Nucleus</location>
        <location evidence="2">Nucleolus</location>
    </subcellularLocation>
</comment>
<comment type="similarity">
    <text evidence="4">Belongs to the PNO1 family.</text>
</comment>
<sequence>MAAPTAIKDLPESKDVEAVSNEGIEGEEEMLIDAGSVPQENEEGASKKKESSEMVLDESGKPKFSAASKSGMKVKLESRKVPVPPHRMTPLKNTWTKIYPPLVDHLKLQVRMNLKTKTIEMKTNKNTVDQGALQKGADFVKAFTLGFDVDDAIALLRLDDLYIETFEVKDVKTLNGDHLSRAIGRIAGKDGKTKFAIENATRTRIVLADSKIHILGGFTHIRMAREAVVSLILGSPPGKVYGNLRTVASRMKERY</sequence>
<reference key="1">
    <citation type="journal article" date="2004" name="Nature">
        <title>Genome evolution in yeasts.</title>
        <authorList>
            <person name="Dujon B."/>
            <person name="Sherman D."/>
            <person name="Fischer G."/>
            <person name="Durrens P."/>
            <person name="Casaregola S."/>
            <person name="Lafontaine I."/>
            <person name="de Montigny J."/>
            <person name="Marck C."/>
            <person name="Neuveglise C."/>
            <person name="Talla E."/>
            <person name="Goffard N."/>
            <person name="Frangeul L."/>
            <person name="Aigle M."/>
            <person name="Anthouard V."/>
            <person name="Babour A."/>
            <person name="Barbe V."/>
            <person name="Barnay S."/>
            <person name="Blanchin S."/>
            <person name="Beckerich J.-M."/>
            <person name="Beyne E."/>
            <person name="Bleykasten C."/>
            <person name="Boisrame A."/>
            <person name="Boyer J."/>
            <person name="Cattolico L."/>
            <person name="Confanioleri F."/>
            <person name="de Daruvar A."/>
            <person name="Despons L."/>
            <person name="Fabre E."/>
            <person name="Fairhead C."/>
            <person name="Ferry-Dumazet H."/>
            <person name="Groppi A."/>
            <person name="Hantraye F."/>
            <person name="Hennequin C."/>
            <person name="Jauniaux N."/>
            <person name="Joyet P."/>
            <person name="Kachouri R."/>
            <person name="Kerrest A."/>
            <person name="Koszul R."/>
            <person name="Lemaire M."/>
            <person name="Lesur I."/>
            <person name="Ma L."/>
            <person name="Muller H."/>
            <person name="Nicaud J.-M."/>
            <person name="Nikolski M."/>
            <person name="Oztas S."/>
            <person name="Ozier-Kalogeropoulos O."/>
            <person name="Pellenz S."/>
            <person name="Potier S."/>
            <person name="Richard G.-F."/>
            <person name="Straub M.-L."/>
            <person name="Suleau A."/>
            <person name="Swennen D."/>
            <person name="Tekaia F."/>
            <person name="Wesolowski-Louvel M."/>
            <person name="Westhof E."/>
            <person name="Wirth B."/>
            <person name="Zeniou-Meyer M."/>
            <person name="Zivanovic Y."/>
            <person name="Bolotin-Fukuhara M."/>
            <person name="Thierry A."/>
            <person name="Bouchier C."/>
            <person name="Caudron B."/>
            <person name="Scarpelli C."/>
            <person name="Gaillardin C."/>
            <person name="Weissenbach J."/>
            <person name="Wincker P."/>
            <person name="Souciet J.-L."/>
        </authorList>
    </citation>
    <scope>NUCLEOTIDE SEQUENCE [LARGE SCALE GENOMIC DNA]</scope>
    <source>
        <strain>ATCC 36239 / CBS 767 / BCRC 21394 / JCM 1990 / NBRC 0083 / IGC 2968</strain>
    </source>
</reference>
<keyword id="KW-0963">Cytoplasm</keyword>
<keyword id="KW-0539">Nucleus</keyword>
<keyword id="KW-1185">Reference proteome</keyword>
<keyword id="KW-0690">Ribosome biogenesis</keyword>
<keyword id="KW-0694">RNA-binding</keyword>
<feature type="chain" id="PRO_0000278369" description="Pre-rRNA-processing protein PNO1">
    <location>
        <begin position="1"/>
        <end position="255"/>
    </location>
</feature>
<feature type="domain" description="KH">
    <location>
        <begin position="176"/>
        <end position="228"/>
    </location>
</feature>
<feature type="region of interest" description="Disordered" evidence="3">
    <location>
        <begin position="1"/>
        <end position="71"/>
    </location>
</feature>
<proteinExistence type="inferred from homology"/>
<gene>
    <name type="primary">PNO1</name>
    <name type="ordered locus">DEHA2G04620g</name>
</gene>
<evidence type="ECO:0000250" key="1"/>
<evidence type="ECO:0000250" key="2">
    <source>
        <dbReference type="UniProtKB" id="Q99216"/>
    </source>
</evidence>
<evidence type="ECO:0000256" key="3">
    <source>
        <dbReference type="SAM" id="MobiDB-lite"/>
    </source>
</evidence>
<evidence type="ECO:0000305" key="4"/>
<dbReference type="EMBL" id="CR382139">
    <property type="protein sequence ID" value="CAG90203.1"/>
    <property type="molecule type" value="Genomic_DNA"/>
</dbReference>
<dbReference type="RefSeq" id="XP_461746.1">
    <property type="nucleotide sequence ID" value="XM_461746.1"/>
</dbReference>
<dbReference type="SMR" id="Q6BJ75"/>
<dbReference type="FunCoup" id="Q6BJ75">
    <property type="interactions" value="987"/>
</dbReference>
<dbReference type="STRING" id="284592.Q6BJ75"/>
<dbReference type="GeneID" id="2904622"/>
<dbReference type="KEGG" id="dha:DEHA2G04620g"/>
<dbReference type="eggNOG" id="KOG3273">
    <property type="taxonomic scope" value="Eukaryota"/>
</dbReference>
<dbReference type="HOGENOM" id="CLU_064992_0_2_1"/>
<dbReference type="InParanoid" id="Q6BJ75"/>
<dbReference type="OMA" id="TPLRNNW"/>
<dbReference type="OrthoDB" id="1932641at2759"/>
<dbReference type="Proteomes" id="UP000000599">
    <property type="component" value="Chromosome G"/>
</dbReference>
<dbReference type="GO" id="GO:0005737">
    <property type="term" value="C:cytoplasm"/>
    <property type="evidence" value="ECO:0007669"/>
    <property type="project" value="UniProtKB-SubCell"/>
</dbReference>
<dbReference type="GO" id="GO:0005730">
    <property type="term" value="C:nucleolus"/>
    <property type="evidence" value="ECO:0007669"/>
    <property type="project" value="UniProtKB-SubCell"/>
</dbReference>
<dbReference type="GO" id="GO:0042134">
    <property type="term" value="F:rRNA primary transcript binding"/>
    <property type="evidence" value="ECO:0007669"/>
    <property type="project" value="EnsemblFungi"/>
</dbReference>
<dbReference type="GO" id="GO:0051082">
    <property type="term" value="F:unfolded protein binding"/>
    <property type="evidence" value="ECO:0007669"/>
    <property type="project" value="EnsemblFungi"/>
</dbReference>
<dbReference type="GO" id="GO:0000447">
    <property type="term" value="P:endonucleolytic cleavage in ITS1 to separate SSU-rRNA from 5.8S rRNA and LSU-rRNA from tricistronic rRNA transcript (SSU-rRNA, 5.8S rRNA, LSU-rRNA)"/>
    <property type="evidence" value="ECO:0007669"/>
    <property type="project" value="EnsemblFungi"/>
</dbReference>
<dbReference type="GO" id="GO:0000472">
    <property type="term" value="P:endonucleolytic cleavage to generate mature 5'-end of SSU-rRNA from (SSU-rRNA, 5.8S rRNA, LSU-rRNA)"/>
    <property type="evidence" value="ECO:0007669"/>
    <property type="project" value="EnsemblFungi"/>
</dbReference>
<dbReference type="GO" id="GO:0043248">
    <property type="term" value="P:proteasome assembly"/>
    <property type="evidence" value="ECO:0007669"/>
    <property type="project" value="EnsemblFungi"/>
</dbReference>
<dbReference type="GO" id="GO:0000056">
    <property type="term" value="P:ribosomal small subunit export from nucleus"/>
    <property type="evidence" value="ECO:0007669"/>
    <property type="project" value="EnsemblFungi"/>
</dbReference>
<dbReference type="GO" id="GO:0042255">
    <property type="term" value="P:ribosome assembly"/>
    <property type="evidence" value="ECO:0007669"/>
    <property type="project" value="EnsemblFungi"/>
</dbReference>
<dbReference type="CDD" id="cd22391">
    <property type="entry name" value="KH-I_PNO1_rpt1"/>
    <property type="match status" value="1"/>
</dbReference>
<dbReference type="CDD" id="cd22392">
    <property type="entry name" value="KH-I_PNO1_rpt2"/>
    <property type="match status" value="1"/>
</dbReference>
<dbReference type="FunFam" id="3.30.1370.10:FF:000009">
    <property type="entry name" value="RNA-binding protein PNO1"/>
    <property type="match status" value="1"/>
</dbReference>
<dbReference type="FunFam" id="3.30.1370.10:FF:000048">
    <property type="entry name" value="RNA-binding protein PNO1 isoform X2"/>
    <property type="match status" value="1"/>
</dbReference>
<dbReference type="Gene3D" id="3.30.1370.10">
    <property type="entry name" value="K Homology domain, type 1"/>
    <property type="match status" value="1"/>
</dbReference>
<dbReference type="InterPro" id="IPR055212">
    <property type="entry name" value="KH-I_PNO1_first"/>
</dbReference>
<dbReference type="InterPro" id="IPR004087">
    <property type="entry name" value="KH_dom"/>
</dbReference>
<dbReference type="InterPro" id="IPR036612">
    <property type="entry name" value="KH_dom_type_1_sf"/>
</dbReference>
<dbReference type="InterPro" id="IPR055211">
    <property type="entry name" value="KH_PNO1_2nd"/>
</dbReference>
<dbReference type="InterPro" id="IPR041174">
    <property type="entry name" value="KRR1-like_KH1"/>
</dbReference>
<dbReference type="PANTHER" id="PTHR12826">
    <property type="entry name" value="RIBONUCLEASE Y"/>
    <property type="match status" value="1"/>
</dbReference>
<dbReference type="PANTHER" id="PTHR12826:SF13">
    <property type="entry name" value="RNA-BINDING PROTEIN PNO1"/>
    <property type="match status" value="1"/>
</dbReference>
<dbReference type="Pfam" id="PF17903">
    <property type="entry name" value="KH_KRR1_1st"/>
    <property type="match status" value="1"/>
</dbReference>
<dbReference type="Pfam" id="PF22891">
    <property type="entry name" value="KH_PNO1_2nd"/>
    <property type="match status" value="1"/>
</dbReference>
<dbReference type="SMART" id="SM00322">
    <property type="entry name" value="KH"/>
    <property type="match status" value="1"/>
</dbReference>
<dbReference type="SUPFAM" id="SSF54791">
    <property type="entry name" value="Eukaryotic type KH-domain (KH-domain type I)"/>
    <property type="match status" value="1"/>
</dbReference>
<accession>Q6BJ75</accession>
<name>PNO1_DEBHA</name>